<sequence>MQYSIEINKNTEIFDIDKVAKQATGVLMRQGKSVVLATVAREEKQVEEDFLPLTVQYIEKAYAAGKIPGGYVKRETKPSDAETLTARIIDRSLRPLFPKGYAYPTQIVVMVLSADPKVDLQVMSLNAASVALYLSDIPMKAPVCGVRIGKIDGNFILNPNNEELQNSTLDLYVAGVKDELLMIEMRALPDQKENEIFIEAPYADVLTQTTSQNMNELSEDEILEALNLAQKAILNGSNAYEEAFSKHKKNSQIELKNEIEHPEILAFIENNFQKQIKKAINQMAKSERASELNKIAKEILNLEIAKDWSEESILNTLAKVKRKLIREQILNEGKRADGRSLNEVRPISIETNILPNAHGSCLFTRGQTQALVVATLGGENDAQMIDLLTEKNPISERFMVNYNFPGFSVGEASPIKAPGRRELGHGNLAKRALYPSVDENYPYVIRLVSEILESNGSSSMATVCGGSLALKAAGVPSLKLVAGVAMGLIFEDNKYAVLTDIMGLEDHDGDMDFKVAGSKDGITALQMDIKLGGIDQETLKQALYQAKEGRIHILNIMEEATKEIIVNEEVLPKLELFSVDPSKIVDIIGQAGKTIKEIIEKFGVSIDLDREKGEVKIAGSQNEQIKAAKDYIINITSSQKGTKKGSKDKDISDFELGQEFQGIVKKIAPFGAFVELKNGVDGLLHSSKIKHLDLSENQSLKVKISEIKNGKISVDLCE</sequence>
<comment type="function">
    <text evidence="1">Involved in mRNA degradation. Catalyzes the phosphorolysis of single-stranded polyribonucleotides processively in the 3'- to 5'-direction.</text>
</comment>
<comment type="catalytic activity">
    <reaction evidence="1">
        <text>RNA(n+1) + phosphate = RNA(n) + a ribonucleoside 5'-diphosphate</text>
        <dbReference type="Rhea" id="RHEA:22096"/>
        <dbReference type="Rhea" id="RHEA-COMP:14527"/>
        <dbReference type="Rhea" id="RHEA-COMP:17342"/>
        <dbReference type="ChEBI" id="CHEBI:43474"/>
        <dbReference type="ChEBI" id="CHEBI:57930"/>
        <dbReference type="ChEBI" id="CHEBI:140395"/>
        <dbReference type="EC" id="2.7.7.8"/>
    </reaction>
</comment>
<comment type="cofactor">
    <cofactor evidence="1">
        <name>Mg(2+)</name>
        <dbReference type="ChEBI" id="CHEBI:18420"/>
    </cofactor>
</comment>
<comment type="subcellular location">
    <subcellularLocation>
        <location evidence="1">Cytoplasm</location>
    </subcellularLocation>
</comment>
<comment type="similarity">
    <text evidence="1">Belongs to the polyribonucleotide nucleotidyltransferase family.</text>
</comment>
<accession>A7H2C7</accession>
<protein>
    <recommendedName>
        <fullName evidence="1">Polyribonucleotide nucleotidyltransferase</fullName>
        <ecNumber evidence="1">2.7.7.8</ecNumber>
    </recommendedName>
    <alternativeName>
        <fullName evidence="1">Polynucleotide phosphorylase</fullName>
        <shortName evidence="1">PNPase</shortName>
    </alternativeName>
</protein>
<proteinExistence type="inferred from homology"/>
<name>PNP_CAMJD</name>
<feature type="chain" id="PRO_0000329573" description="Polyribonucleotide nucleotidyltransferase">
    <location>
        <begin position="1"/>
        <end position="718"/>
    </location>
</feature>
<feature type="domain" description="KH" evidence="1">
    <location>
        <begin position="572"/>
        <end position="632"/>
    </location>
</feature>
<feature type="domain" description="S1 motif" evidence="1">
    <location>
        <begin position="657"/>
        <end position="718"/>
    </location>
</feature>
<feature type="binding site" evidence="1">
    <location>
        <position position="506"/>
    </location>
    <ligand>
        <name>Mg(2+)</name>
        <dbReference type="ChEBI" id="CHEBI:18420"/>
    </ligand>
</feature>
<feature type="binding site" evidence="1">
    <location>
        <position position="512"/>
    </location>
    <ligand>
        <name>Mg(2+)</name>
        <dbReference type="ChEBI" id="CHEBI:18420"/>
    </ligand>
</feature>
<dbReference type="EC" id="2.7.7.8" evidence="1"/>
<dbReference type="EMBL" id="CP000768">
    <property type="protein sequence ID" value="ABS44081.1"/>
    <property type="molecule type" value="Genomic_DNA"/>
</dbReference>
<dbReference type="SMR" id="A7H2C7"/>
<dbReference type="KEGG" id="cjd:JJD26997_0472"/>
<dbReference type="HOGENOM" id="CLU_004217_2_2_7"/>
<dbReference type="Proteomes" id="UP000002302">
    <property type="component" value="Chromosome"/>
</dbReference>
<dbReference type="GO" id="GO:0005829">
    <property type="term" value="C:cytosol"/>
    <property type="evidence" value="ECO:0007669"/>
    <property type="project" value="TreeGrafter"/>
</dbReference>
<dbReference type="GO" id="GO:0000175">
    <property type="term" value="F:3'-5'-RNA exonuclease activity"/>
    <property type="evidence" value="ECO:0007669"/>
    <property type="project" value="TreeGrafter"/>
</dbReference>
<dbReference type="GO" id="GO:0000287">
    <property type="term" value="F:magnesium ion binding"/>
    <property type="evidence" value="ECO:0007669"/>
    <property type="project" value="UniProtKB-UniRule"/>
</dbReference>
<dbReference type="GO" id="GO:0004654">
    <property type="term" value="F:polyribonucleotide nucleotidyltransferase activity"/>
    <property type="evidence" value="ECO:0007669"/>
    <property type="project" value="UniProtKB-UniRule"/>
</dbReference>
<dbReference type="GO" id="GO:0003723">
    <property type="term" value="F:RNA binding"/>
    <property type="evidence" value="ECO:0007669"/>
    <property type="project" value="UniProtKB-UniRule"/>
</dbReference>
<dbReference type="GO" id="GO:0006402">
    <property type="term" value="P:mRNA catabolic process"/>
    <property type="evidence" value="ECO:0007669"/>
    <property type="project" value="UniProtKB-UniRule"/>
</dbReference>
<dbReference type="GO" id="GO:0006396">
    <property type="term" value="P:RNA processing"/>
    <property type="evidence" value="ECO:0007669"/>
    <property type="project" value="InterPro"/>
</dbReference>
<dbReference type="CDD" id="cd02393">
    <property type="entry name" value="KH-I_PNPase"/>
    <property type="match status" value="1"/>
</dbReference>
<dbReference type="CDD" id="cd11364">
    <property type="entry name" value="RNase_PH_PNPase_2"/>
    <property type="match status" value="1"/>
</dbReference>
<dbReference type="FunFam" id="3.30.1370.10:FF:000001">
    <property type="entry name" value="Polyribonucleotide nucleotidyltransferase"/>
    <property type="match status" value="1"/>
</dbReference>
<dbReference type="FunFam" id="3.30.230.70:FF:000026">
    <property type="entry name" value="Polyribonucleotide nucleotidyltransferase"/>
    <property type="match status" value="1"/>
</dbReference>
<dbReference type="FunFam" id="3.30.230.70:FF:000029">
    <property type="entry name" value="Polyribonucleotide nucleotidyltransferase"/>
    <property type="match status" value="1"/>
</dbReference>
<dbReference type="Gene3D" id="3.30.230.70">
    <property type="entry name" value="GHMP Kinase, N-terminal domain"/>
    <property type="match status" value="2"/>
</dbReference>
<dbReference type="Gene3D" id="3.30.1370.10">
    <property type="entry name" value="K Homology domain, type 1"/>
    <property type="match status" value="1"/>
</dbReference>
<dbReference type="Gene3D" id="2.40.50.140">
    <property type="entry name" value="Nucleic acid-binding proteins"/>
    <property type="match status" value="1"/>
</dbReference>
<dbReference type="HAMAP" id="MF_01595">
    <property type="entry name" value="PNPase"/>
    <property type="match status" value="1"/>
</dbReference>
<dbReference type="InterPro" id="IPR001247">
    <property type="entry name" value="ExoRNase_PH_dom1"/>
</dbReference>
<dbReference type="InterPro" id="IPR015847">
    <property type="entry name" value="ExoRNase_PH_dom2"/>
</dbReference>
<dbReference type="InterPro" id="IPR036345">
    <property type="entry name" value="ExoRNase_PH_dom2_sf"/>
</dbReference>
<dbReference type="InterPro" id="IPR004087">
    <property type="entry name" value="KH_dom"/>
</dbReference>
<dbReference type="InterPro" id="IPR004088">
    <property type="entry name" value="KH_dom_type_1"/>
</dbReference>
<dbReference type="InterPro" id="IPR036612">
    <property type="entry name" value="KH_dom_type_1_sf"/>
</dbReference>
<dbReference type="InterPro" id="IPR012340">
    <property type="entry name" value="NA-bd_OB-fold"/>
</dbReference>
<dbReference type="InterPro" id="IPR012162">
    <property type="entry name" value="PNPase"/>
</dbReference>
<dbReference type="InterPro" id="IPR027408">
    <property type="entry name" value="PNPase/RNase_PH_dom_sf"/>
</dbReference>
<dbReference type="InterPro" id="IPR015848">
    <property type="entry name" value="PNPase_PH_RNA-bd_bac/org-type"/>
</dbReference>
<dbReference type="InterPro" id="IPR020568">
    <property type="entry name" value="Ribosomal_Su5_D2-typ_SF"/>
</dbReference>
<dbReference type="InterPro" id="IPR003029">
    <property type="entry name" value="S1_domain"/>
</dbReference>
<dbReference type="NCBIfam" id="TIGR03591">
    <property type="entry name" value="polynuc_phos"/>
    <property type="match status" value="1"/>
</dbReference>
<dbReference type="NCBIfam" id="NF008805">
    <property type="entry name" value="PRK11824.1"/>
    <property type="match status" value="1"/>
</dbReference>
<dbReference type="PANTHER" id="PTHR11252">
    <property type="entry name" value="POLYRIBONUCLEOTIDE NUCLEOTIDYLTRANSFERASE"/>
    <property type="match status" value="1"/>
</dbReference>
<dbReference type="PANTHER" id="PTHR11252:SF0">
    <property type="entry name" value="POLYRIBONUCLEOTIDE NUCLEOTIDYLTRANSFERASE 1, MITOCHONDRIAL"/>
    <property type="match status" value="1"/>
</dbReference>
<dbReference type="Pfam" id="PF00013">
    <property type="entry name" value="KH_1"/>
    <property type="match status" value="1"/>
</dbReference>
<dbReference type="Pfam" id="PF03726">
    <property type="entry name" value="PNPase"/>
    <property type="match status" value="1"/>
</dbReference>
<dbReference type="Pfam" id="PF01138">
    <property type="entry name" value="RNase_PH"/>
    <property type="match status" value="2"/>
</dbReference>
<dbReference type="Pfam" id="PF03725">
    <property type="entry name" value="RNase_PH_C"/>
    <property type="match status" value="2"/>
</dbReference>
<dbReference type="Pfam" id="PF00575">
    <property type="entry name" value="S1"/>
    <property type="match status" value="1"/>
</dbReference>
<dbReference type="PIRSF" id="PIRSF005499">
    <property type="entry name" value="PNPase"/>
    <property type="match status" value="1"/>
</dbReference>
<dbReference type="SMART" id="SM00322">
    <property type="entry name" value="KH"/>
    <property type="match status" value="1"/>
</dbReference>
<dbReference type="SMART" id="SM00316">
    <property type="entry name" value="S1"/>
    <property type="match status" value="1"/>
</dbReference>
<dbReference type="SUPFAM" id="SSF54791">
    <property type="entry name" value="Eukaryotic type KH-domain (KH-domain type I)"/>
    <property type="match status" value="1"/>
</dbReference>
<dbReference type="SUPFAM" id="SSF50249">
    <property type="entry name" value="Nucleic acid-binding proteins"/>
    <property type="match status" value="1"/>
</dbReference>
<dbReference type="SUPFAM" id="SSF55666">
    <property type="entry name" value="Ribonuclease PH domain 2-like"/>
    <property type="match status" value="2"/>
</dbReference>
<dbReference type="SUPFAM" id="SSF54211">
    <property type="entry name" value="Ribosomal protein S5 domain 2-like"/>
    <property type="match status" value="2"/>
</dbReference>
<dbReference type="PROSITE" id="PS50084">
    <property type="entry name" value="KH_TYPE_1"/>
    <property type="match status" value="1"/>
</dbReference>
<dbReference type="PROSITE" id="PS50126">
    <property type="entry name" value="S1"/>
    <property type="match status" value="1"/>
</dbReference>
<gene>
    <name evidence="1" type="primary">pnp</name>
    <name type="ordered locus">JJD26997_0472</name>
</gene>
<keyword id="KW-0963">Cytoplasm</keyword>
<keyword id="KW-0460">Magnesium</keyword>
<keyword id="KW-0479">Metal-binding</keyword>
<keyword id="KW-0548">Nucleotidyltransferase</keyword>
<keyword id="KW-0694">RNA-binding</keyword>
<keyword id="KW-0808">Transferase</keyword>
<evidence type="ECO:0000255" key="1">
    <source>
        <dbReference type="HAMAP-Rule" id="MF_01595"/>
    </source>
</evidence>
<reference key="1">
    <citation type="submission" date="2007-07" db="EMBL/GenBank/DDBJ databases">
        <title>Complete genome sequence of Campylobacter jejuni subsp doylei 269.97 isolated from human blood.</title>
        <authorList>
            <person name="Fouts D.E."/>
            <person name="Mongodin E.F."/>
            <person name="Puiu D."/>
            <person name="Sebastian Y."/>
            <person name="Miller W.G."/>
            <person name="Mandrell R.E."/>
            <person name="Lastovica A.J."/>
            <person name="Nelson K.E."/>
        </authorList>
    </citation>
    <scope>NUCLEOTIDE SEQUENCE [LARGE SCALE GENOMIC DNA]</scope>
    <source>
        <strain>ATCC BAA-1458 / RM4099 / 269.97</strain>
    </source>
</reference>
<organism>
    <name type="scientific">Campylobacter jejuni subsp. doylei (strain ATCC BAA-1458 / RM4099 / 269.97)</name>
    <dbReference type="NCBI Taxonomy" id="360109"/>
    <lineage>
        <taxon>Bacteria</taxon>
        <taxon>Pseudomonadati</taxon>
        <taxon>Campylobacterota</taxon>
        <taxon>Epsilonproteobacteria</taxon>
        <taxon>Campylobacterales</taxon>
        <taxon>Campylobacteraceae</taxon>
        <taxon>Campylobacter</taxon>
    </lineage>
</organism>